<proteinExistence type="inferred from homology"/>
<dbReference type="EC" id="4.2.1.19" evidence="1"/>
<dbReference type="EMBL" id="CR543861">
    <property type="protein sequence ID" value="CAG70057.1"/>
    <property type="molecule type" value="Genomic_DNA"/>
</dbReference>
<dbReference type="SMR" id="Q6F7A8"/>
<dbReference type="STRING" id="202950.GCA_001485005_02233"/>
<dbReference type="KEGG" id="aci:ACIAD3395"/>
<dbReference type="eggNOG" id="COG0131">
    <property type="taxonomic scope" value="Bacteria"/>
</dbReference>
<dbReference type="HOGENOM" id="CLU_044308_3_0_6"/>
<dbReference type="UniPathway" id="UPA00031">
    <property type="reaction ID" value="UER00011"/>
</dbReference>
<dbReference type="Proteomes" id="UP000000430">
    <property type="component" value="Chromosome"/>
</dbReference>
<dbReference type="GO" id="GO:0005737">
    <property type="term" value="C:cytoplasm"/>
    <property type="evidence" value="ECO:0007669"/>
    <property type="project" value="UniProtKB-SubCell"/>
</dbReference>
<dbReference type="GO" id="GO:0004424">
    <property type="term" value="F:imidazoleglycerol-phosphate dehydratase activity"/>
    <property type="evidence" value="ECO:0007669"/>
    <property type="project" value="UniProtKB-UniRule"/>
</dbReference>
<dbReference type="GO" id="GO:0000105">
    <property type="term" value="P:L-histidine biosynthetic process"/>
    <property type="evidence" value="ECO:0007669"/>
    <property type="project" value="UniProtKB-UniRule"/>
</dbReference>
<dbReference type="CDD" id="cd07914">
    <property type="entry name" value="IGPD"/>
    <property type="match status" value="1"/>
</dbReference>
<dbReference type="FunFam" id="3.30.230.40:FF:000002">
    <property type="entry name" value="Imidazoleglycerol-phosphate dehydratase"/>
    <property type="match status" value="1"/>
</dbReference>
<dbReference type="FunFam" id="3.30.230.40:FF:000003">
    <property type="entry name" value="Imidazoleglycerol-phosphate dehydratase HisB"/>
    <property type="match status" value="1"/>
</dbReference>
<dbReference type="Gene3D" id="3.30.230.40">
    <property type="entry name" value="Imidazole glycerol phosphate dehydratase, domain 1"/>
    <property type="match status" value="2"/>
</dbReference>
<dbReference type="HAMAP" id="MF_00076">
    <property type="entry name" value="HisB"/>
    <property type="match status" value="1"/>
</dbReference>
<dbReference type="InterPro" id="IPR038494">
    <property type="entry name" value="IGPD_sf"/>
</dbReference>
<dbReference type="InterPro" id="IPR000807">
    <property type="entry name" value="ImidazoleglycerolP_deHydtase"/>
</dbReference>
<dbReference type="InterPro" id="IPR020565">
    <property type="entry name" value="ImidazoleglycerP_deHydtase_CS"/>
</dbReference>
<dbReference type="InterPro" id="IPR020568">
    <property type="entry name" value="Ribosomal_Su5_D2-typ_SF"/>
</dbReference>
<dbReference type="NCBIfam" id="NF002106">
    <property type="entry name" value="PRK00951.1-1"/>
    <property type="match status" value="1"/>
</dbReference>
<dbReference type="NCBIfam" id="NF002109">
    <property type="entry name" value="PRK00951.1-5"/>
    <property type="match status" value="1"/>
</dbReference>
<dbReference type="NCBIfam" id="NF002111">
    <property type="entry name" value="PRK00951.2-1"/>
    <property type="match status" value="1"/>
</dbReference>
<dbReference type="NCBIfam" id="NF002114">
    <property type="entry name" value="PRK00951.2-4"/>
    <property type="match status" value="1"/>
</dbReference>
<dbReference type="PANTHER" id="PTHR23133:SF2">
    <property type="entry name" value="IMIDAZOLEGLYCEROL-PHOSPHATE DEHYDRATASE"/>
    <property type="match status" value="1"/>
</dbReference>
<dbReference type="PANTHER" id="PTHR23133">
    <property type="entry name" value="IMIDAZOLEGLYCEROL-PHOSPHATE DEHYDRATASE HIS7"/>
    <property type="match status" value="1"/>
</dbReference>
<dbReference type="Pfam" id="PF00475">
    <property type="entry name" value="IGPD"/>
    <property type="match status" value="1"/>
</dbReference>
<dbReference type="SUPFAM" id="SSF54211">
    <property type="entry name" value="Ribosomal protein S5 domain 2-like"/>
    <property type="match status" value="2"/>
</dbReference>
<dbReference type="PROSITE" id="PS00954">
    <property type="entry name" value="IGP_DEHYDRATASE_1"/>
    <property type="match status" value="1"/>
</dbReference>
<dbReference type="PROSITE" id="PS00955">
    <property type="entry name" value="IGP_DEHYDRATASE_2"/>
    <property type="match status" value="1"/>
</dbReference>
<reference key="1">
    <citation type="journal article" date="2004" name="Nucleic Acids Res.">
        <title>Unique features revealed by the genome sequence of Acinetobacter sp. ADP1, a versatile and naturally transformation competent bacterium.</title>
        <authorList>
            <person name="Barbe V."/>
            <person name="Vallenet D."/>
            <person name="Fonknechten N."/>
            <person name="Kreimeyer A."/>
            <person name="Oztas S."/>
            <person name="Labarre L."/>
            <person name="Cruveiller S."/>
            <person name="Robert C."/>
            <person name="Duprat S."/>
            <person name="Wincker P."/>
            <person name="Ornston L.N."/>
            <person name="Weissenbach J."/>
            <person name="Marliere P."/>
            <person name="Cohen G.N."/>
            <person name="Medigue C."/>
        </authorList>
    </citation>
    <scope>NUCLEOTIDE SEQUENCE [LARGE SCALE GENOMIC DNA]</scope>
    <source>
        <strain>ATCC 33305 / BD413 / ADP1</strain>
    </source>
</reference>
<comment type="catalytic activity">
    <reaction evidence="1">
        <text>D-erythro-1-(imidazol-4-yl)glycerol 3-phosphate = 3-(imidazol-4-yl)-2-oxopropyl phosphate + H2O</text>
        <dbReference type="Rhea" id="RHEA:11040"/>
        <dbReference type="ChEBI" id="CHEBI:15377"/>
        <dbReference type="ChEBI" id="CHEBI:57766"/>
        <dbReference type="ChEBI" id="CHEBI:58278"/>
        <dbReference type="EC" id="4.2.1.19"/>
    </reaction>
</comment>
<comment type="pathway">
    <text evidence="1">Amino-acid biosynthesis; L-histidine biosynthesis; L-histidine from 5-phospho-alpha-D-ribose 1-diphosphate: step 6/9.</text>
</comment>
<comment type="subcellular location">
    <subcellularLocation>
        <location evidence="1">Cytoplasm</location>
    </subcellularLocation>
</comment>
<comment type="similarity">
    <text evidence="1">Belongs to the imidazoleglycerol-phosphate dehydratase family.</text>
</comment>
<accession>Q6F7A8</accession>
<sequence length="202" mass="22539">MRNVSMTERIIEVVRNTNETKIRVRLNLDGSGQGTLNTGVPFLDHMIDQIKRHGLFDIDIHCDGDLEIDDHHTVEDCGITLGQAFAQALGDKKGLRRYGHFYAPLDESLSRVVVDLSGRPGLFMDIPFTRARIGSFDVDLFSEFFQGFVNHALMTLHIDNLKGKNSHHQIESVFKAFARALRMACEIDPRAAGSIASTKGSL</sequence>
<organism>
    <name type="scientific">Acinetobacter baylyi (strain ATCC 33305 / BD413 / ADP1)</name>
    <dbReference type="NCBI Taxonomy" id="62977"/>
    <lineage>
        <taxon>Bacteria</taxon>
        <taxon>Pseudomonadati</taxon>
        <taxon>Pseudomonadota</taxon>
        <taxon>Gammaproteobacteria</taxon>
        <taxon>Moraxellales</taxon>
        <taxon>Moraxellaceae</taxon>
        <taxon>Acinetobacter</taxon>
    </lineage>
</organism>
<gene>
    <name evidence="1" type="primary">hisB</name>
    <name type="ordered locus">ACIAD3395</name>
</gene>
<protein>
    <recommendedName>
        <fullName evidence="1">Imidazoleglycerol-phosphate dehydratase</fullName>
        <shortName evidence="1">IGPD</shortName>
        <ecNumber evidence="1">4.2.1.19</ecNumber>
    </recommendedName>
</protein>
<evidence type="ECO:0000255" key="1">
    <source>
        <dbReference type="HAMAP-Rule" id="MF_00076"/>
    </source>
</evidence>
<name>HIS7_ACIAD</name>
<keyword id="KW-0028">Amino-acid biosynthesis</keyword>
<keyword id="KW-0963">Cytoplasm</keyword>
<keyword id="KW-0368">Histidine biosynthesis</keyword>
<keyword id="KW-0456">Lyase</keyword>
<feature type="chain" id="PRO_0000158096" description="Imidazoleglycerol-phosphate dehydratase">
    <location>
        <begin position="1"/>
        <end position="202"/>
    </location>
</feature>